<proteinExistence type="evidence at protein level"/>
<dbReference type="GO" id="GO:0005576">
    <property type="term" value="C:extracellular region"/>
    <property type="evidence" value="ECO:0007669"/>
    <property type="project" value="UniProtKB-SubCell"/>
</dbReference>
<dbReference type="GO" id="GO:0042742">
    <property type="term" value="P:defense response to bacterium"/>
    <property type="evidence" value="ECO:0007669"/>
    <property type="project" value="UniProtKB-KW"/>
</dbReference>
<dbReference type="InterPro" id="IPR013157">
    <property type="entry name" value="Aurein_antimicrobial_peptide"/>
</dbReference>
<dbReference type="Pfam" id="PF08256">
    <property type="entry name" value="Antimicrobial20"/>
    <property type="match status" value="1"/>
</dbReference>
<reference key="1">
    <citation type="journal article" date="1996" name="Aust. J. Chem.">
        <title>Novel uperin peptides from the dorsal glands of the australian floodplain toadlet Uperoleia inundata.</title>
        <authorList>
            <person name="Bradford A.M."/>
            <person name="Raftery M.J."/>
            <person name="Bowie J.H."/>
            <person name="Tyler M.J."/>
            <person name="Wallace J.C."/>
            <person name="Adams G.W."/>
            <person name="Severini C."/>
        </authorList>
    </citation>
    <scope>PROTEIN SEQUENCE</scope>
    <scope>MASS SPECTROMETRY</scope>
    <source>
        <tissue>Skin secretion</tissue>
    </source>
</reference>
<keyword id="KW-0878">Amphibian defense peptide</keyword>
<keyword id="KW-0044">Antibiotic</keyword>
<keyword id="KW-0929">Antimicrobial</keyword>
<keyword id="KW-0903">Direct protein sequencing</keyword>
<keyword id="KW-0964">Secreted</keyword>
<comment type="function">
    <text>Shows a weak antibacterial activity against B.cereus, E.coli, L.mesenteriodes, L.innocua, M.luteus, P.haemolytica, S.aureus and S.uberis.</text>
</comment>
<comment type="subcellular location">
    <subcellularLocation>
        <location>Secreted</location>
    </subcellularLocation>
</comment>
<comment type="tissue specificity">
    <text>Expressed by the skin dorsal glands.</text>
</comment>
<comment type="mass spectrometry"/>
<name>UPE24_UPEIN</name>
<evidence type="ECO:0000269" key="1">
    <source ref="1"/>
</evidence>
<feature type="peptide" id="PRO_0000043849" description="Uperin-2.4">
    <location>
        <begin position="1"/>
        <end position="19"/>
    </location>
</feature>
<protein>
    <recommendedName>
        <fullName>Uperin-2.4</fullName>
    </recommendedName>
</protein>
<organism>
    <name type="scientific">Uperoleia inundata</name>
    <name type="common">Floodplain toadlet</name>
    <dbReference type="NCBI Taxonomy" id="104953"/>
    <lineage>
        <taxon>Eukaryota</taxon>
        <taxon>Metazoa</taxon>
        <taxon>Chordata</taxon>
        <taxon>Craniata</taxon>
        <taxon>Vertebrata</taxon>
        <taxon>Euteleostomi</taxon>
        <taxon>Amphibia</taxon>
        <taxon>Batrachia</taxon>
        <taxon>Anura</taxon>
        <taxon>Neobatrachia</taxon>
        <taxon>Myobatrachoidea</taxon>
        <taxon>Myobatrachidae</taxon>
        <taxon>Myobatrachinae</taxon>
        <taxon>Uperoleia</taxon>
    </lineage>
</organism>
<sequence>GILDFAKTVVGGIRNALGI</sequence>
<accession>P82030</accession>